<evidence type="ECO:0000255" key="1">
    <source>
        <dbReference type="PROSITE-ProRule" id="PRU00837"/>
    </source>
</evidence>
<evidence type="ECO:0000305" key="2"/>
<proteinExistence type="evidence at protein level"/>
<reference evidence="2" key="1">
    <citation type="submission" date="2000-12" db="UniProtKB">
        <authorList>
            <person name="Rodrigues J.A."/>
            <person name="Spit A."/>
            <person name="Brandt W.F."/>
        </authorList>
    </citation>
    <scope>PROTEIN SEQUENCE</scope>
</reference>
<name>H1B_OLILU</name>
<feature type="chain" id="PRO_0000195941" description="Histone H1B">
    <location>
        <begin position="1"/>
        <end position="42" status="greater than"/>
    </location>
</feature>
<feature type="domain" description="H15" evidence="1">
    <location>
        <begin position="1"/>
        <end position="42"/>
    </location>
</feature>
<feature type="non-terminal residue" evidence="2">
    <location>
        <position position="42"/>
    </location>
</feature>
<protein>
    <recommendedName>
        <fullName>Histone H1B</fullName>
    </recommendedName>
</protein>
<comment type="function">
    <text>Histones H1 are necessary for the condensation of nucleosome chains into higher-order structures.</text>
</comment>
<comment type="subcellular location">
    <subcellularLocation>
        <location>Nucleus</location>
    </subcellularLocation>
    <subcellularLocation>
        <location>Chromosome</location>
    </subcellularLocation>
</comment>
<comment type="similarity">
    <text evidence="1">Belongs to the histone H1/H5 family.</text>
</comment>
<accession>P82899</accession>
<organism>
    <name type="scientific">Olisthodiscus luteus</name>
    <name type="common">Marine phytoflagellate</name>
    <dbReference type="NCBI Taxonomy" id="83000"/>
    <lineage>
        <taxon>Eukaryota</taxon>
        <taxon>Sar</taxon>
        <taxon>Stramenopiles</taxon>
        <taxon>Ochrophyta</taxon>
        <taxon>Olisthodiscophyceae</taxon>
        <taxon>Olisthodiscaceae</taxon>
        <taxon>Olisthodiscus</taxon>
    </lineage>
</organism>
<dbReference type="SMR" id="P82899"/>
<dbReference type="GO" id="GO:0000786">
    <property type="term" value="C:nucleosome"/>
    <property type="evidence" value="ECO:0007669"/>
    <property type="project" value="InterPro"/>
</dbReference>
<dbReference type="GO" id="GO:0005634">
    <property type="term" value="C:nucleus"/>
    <property type="evidence" value="ECO:0007669"/>
    <property type="project" value="UniProtKB-SubCell"/>
</dbReference>
<dbReference type="GO" id="GO:0003677">
    <property type="term" value="F:DNA binding"/>
    <property type="evidence" value="ECO:0007669"/>
    <property type="project" value="UniProtKB-KW"/>
</dbReference>
<dbReference type="GO" id="GO:0006334">
    <property type="term" value="P:nucleosome assembly"/>
    <property type="evidence" value="ECO:0007669"/>
    <property type="project" value="InterPro"/>
</dbReference>
<dbReference type="CDD" id="cd00073">
    <property type="entry name" value="H15"/>
    <property type="match status" value="1"/>
</dbReference>
<dbReference type="Gene3D" id="1.10.10.10">
    <property type="entry name" value="Winged helix-like DNA-binding domain superfamily/Winged helix DNA-binding domain"/>
    <property type="match status" value="1"/>
</dbReference>
<dbReference type="InterPro" id="IPR005818">
    <property type="entry name" value="Histone_H1/H5_H15"/>
</dbReference>
<dbReference type="InterPro" id="IPR036388">
    <property type="entry name" value="WH-like_DNA-bd_sf"/>
</dbReference>
<dbReference type="InterPro" id="IPR036390">
    <property type="entry name" value="WH_DNA-bd_sf"/>
</dbReference>
<dbReference type="Pfam" id="PF00538">
    <property type="entry name" value="Linker_histone"/>
    <property type="match status" value="1"/>
</dbReference>
<dbReference type="SUPFAM" id="SSF46785">
    <property type="entry name" value="Winged helix' DNA-binding domain"/>
    <property type="match status" value="1"/>
</dbReference>
<dbReference type="PROSITE" id="PS51504">
    <property type="entry name" value="H15"/>
    <property type="match status" value="1"/>
</dbReference>
<sequence>TYYELIKAAILALKERNGSSAQAIKKYILENNKIEFQQTFLR</sequence>
<keyword id="KW-0158">Chromosome</keyword>
<keyword id="KW-0903">Direct protein sequencing</keyword>
<keyword id="KW-0238">DNA-binding</keyword>
<keyword id="KW-0539">Nucleus</keyword>